<name>RS15_TREDE</name>
<reference key="1">
    <citation type="journal article" date="2004" name="Proc. Natl. Acad. Sci. U.S.A.">
        <title>Comparison of the genome of the oral pathogen Treponema denticola with other spirochete genomes.</title>
        <authorList>
            <person name="Seshadri R."/>
            <person name="Myers G.S.A."/>
            <person name="Tettelin H."/>
            <person name="Eisen J.A."/>
            <person name="Heidelberg J.F."/>
            <person name="Dodson R.J."/>
            <person name="Davidsen T.M."/>
            <person name="DeBoy R.T."/>
            <person name="Fouts D.E."/>
            <person name="Haft D.H."/>
            <person name="Selengut J."/>
            <person name="Ren Q."/>
            <person name="Brinkac L.M."/>
            <person name="Madupu R."/>
            <person name="Kolonay J.F."/>
            <person name="Durkin S.A."/>
            <person name="Daugherty S.C."/>
            <person name="Shetty J."/>
            <person name="Shvartsbeyn A."/>
            <person name="Gebregeorgis E."/>
            <person name="Geer K."/>
            <person name="Tsegaye G."/>
            <person name="Malek J.A."/>
            <person name="Ayodeji B."/>
            <person name="Shatsman S."/>
            <person name="McLeod M.P."/>
            <person name="Smajs D."/>
            <person name="Howell J.K."/>
            <person name="Pal S."/>
            <person name="Amin A."/>
            <person name="Vashisth P."/>
            <person name="McNeill T.Z."/>
            <person name="Xiang Q."/>
            <person name="Sodergren E."/>
            <person name="Baca E."/>
            <person name="Weinstock G.M."/>
            <person name="Norris S.J."/>
            <person name="Fraser C.M."/>
            <person name="Paulsen I.T."/>
        </authorList>
    </citation>
    <scope>NUCLEOTIDE SEQUENCE [LARGE SCALE GENOMIC DNA]</scope>
    <source>
        <strain>ATCC 35405 / DSM 14222 / CIP 103919 / JCM 8153 / KCTC 15104</strain>
    </source>
</reference>
<dbReference type="EMBL" id="AE017226">
    <property type="protein sequence ID" value="AAS11529.1"/>
    <property type="molecule type" value="Genomic_DNA"/>
</dbReference>
<dbReference type="RefSeq" id="NP_971648.1">
    <property type="nucleotide sequence ID" value="NC_002967.9"/>
</dbReference>
<dbReference type="RefSeq" id="WP_002671840.1">
    <property type="nucleotide sequence ID" value="NC_002967.9"/>
</dbReference>
<dbReference type="SMR" id="Q73NW2"/>
<dbReference type="STRING" id="243275.TDE_1040"/>
<dbReference type="PaxDb" id="243275-TDE_1040"/>
<dbReference type="GeneID" id="2741314"/>
<dbReference type="KEGG" id="tde:TDE_1040"/>
<dbReference type="PATRIC" id="fig|243275.7.peg.1000"/>
<dbReference type="eggNOG" id="COG0184">
    <property type="taxonomic scope" value="Bacteria"/>
</dbReference>
<dbReference type="HOGENOM" id="CLU_148518_0_0_12"/>
<dbReference type="OrthoDB" id="9799262at2"/>
<dbReference type="Proteomes" id="UP000008212">
    <property type="component" value="Chromosome"/>
</dbReference>
<dbReference type="GO" id="GO:0022627">
    <property type="term" value="C:cytosolic small ribosomal subunit"/>
    <property type="evidence" value="ECO:0007669"/>
    <property type="project" value="TreeGrafter"/>
</dbReference>
<dbReference type="GO" id="GO:0019843">
    <property type="term" value="F:rRNA binding"/>
    <property type="evidence" value="ECO:0007669"/>
    <property type="project" value="UniProtKB-UniRule"/>
</dbReference>
<dbReference type="GO" id="GO:0003735">
    <property type="term" value="F:structural constituent of ribosome"/>
    <property type="evidence" value="ECO:0007669"/>
    <property type="project" value="InterPro"/>
</dbReference>
<dbReference type="GO" id="GO:0006412">
    <property type="term" value="P:translation"/>
    <property type="evidence" value="ECO:0007669"/>
    <property type="project" value="UniProtKB-UniRule"/>
</dbReference>
<dbReference type="CDD" id="cd00353">
    <property type="entry name" value="Ribosomal_S15p_S13e"/>
    <property type="match status" value="1"/>
</dbReference>
<dbReference type="FunFam" id="1.10.287.10:FF:000002">
    <property type="entry name" value="30S ribosomal protein S15"/>
    <property type="match status" value="1"/>
</dbReference>
<dbReference type="Gene3D" id="6.10.250.3130">
    <property type="match status" value="1"/>
</dbReference>
<dbReference type="Gene3D" id="1.10.287.10">
    <property type="entry name" value="S15/NS1, RNA-binding"/>
    <property type="match status" value="1"/>
</dbReference>
<dbReference type="HAMAP" id="MF_01343_B">
    <property type="entry name" value="Ribosomal_uS15_B"/>
    <property type="match status" value="1"/>
</dbReference>
<dbReference type="InterPro" id="IPR000589">
    <property type="entry name" value="Ribosomal_uS15"/>
</dbReference>
<dbReference type="InterPro" id="IPR005290">
    <property type="entry name" value="Ribosomal_uS15_bac-type"/>
</dbReference>
<dbReference type="InterPro" id="IPR009068">
    <property type="entry name" value="uS15_NS1_RNA-bd_sf"/>
</dbReference>
<dbReference type="NCBIfam" id="TIGR00952">
    <property type="entry name" value="S15_bact"/>
    <property type="match status" value="1"/>
</dbReference>
<dbReference type="PANTHER" id="PTHR23321">
    <property type="entry name" value="RIBOSOMAL PROTEIN S15, BACTERIAL AND ORGANELLAR"/>
    <property type="match status" value="1"/>
</dbReference>
<dbReference type="PANTHER" id="PTHR23321:SF26">
    <property type="entry name" value="SMALL RIBOSOMAL SUBUNIT PROTEIN US15M"/>
    <property type="match status" value="1"/>
</dbReference>
<dbReference type="Pfam" id="PF00312">
    <property type="entry name" value="Ribosomal_S15"/>
    <property type="match status" value="1"/>
</dbReference>
<dbReference type="SMART" id="SM01387">
    <property type="entry name" value="Ribosomal_S15"/>
    <property type="match status" value="1"/>
</dbReference>
<dbReference type="SUPFAM" id="SSF47060">
    <property type="entry name" value="S15/NS1 RNA-binding domain"/>
    <property type="match status" value="1"/>
</dbReference>
<sequence>MAVTKEQKASIVKKFGASEKDTGDVKVQIALLTEKINQLTNHCKDHPKDAGSRRGLISMVGHRRSLLKYYRRTDIEGYRTILKELNLRK</sequence>
<keyword id="KW-1185">Reference proteome</keyword>
<keyword id="KW-0687">Ribonucleoprotein</keyword>
<keyword id="KW-0689">Ribosomal protein</keyword>
<keyword id="KW-0694">RNA-binding</keyword>
<keyword id="KW-0699">rRNA-binding</keyword>
<gene>
    <name evidence="1" type="primary">rpsO</name>
    <name type="ordered locus">TDE_1040</name>
</gene>
<proteinExistence type="inferred from homology"/>
<organism>
    <name type="scientific">Treponema denticola (strain ATCC 35405 / DSM 14222 / CIP 103919 / JCM 8153 / KCTC 15104)</name>
    <dbReference type="NCBI Taxonomy" id="243275"/>
    <lineage>
        <taxon>Bacteria</taxon>
        <taxon>Pseudomonadati</taxon>
        <taxon>Spirochaetota</taxon>
        <taxon>Spirochaetia</taxon>
        <taxon>Spirochaetales</taxon>
        <taxon>Treponemataceae</taxon>
        <taxon>Treponema</taxon>
    </lineage>
</organism>
<comment type="function">
    <text evidence="1">One of the primary rRNA binding proteins, it binds directly to 16S rRNA where it helps nucleate assembly of the platform of the 30S subunit by binding and bridging several RNA helices of the 16S rRNA.</text>
</comment>
<comment type="function">
    <text evidence="1">Forms an intersubunit bridge (bridge B4) with the 23S rRNA of the 50S subunit in the ribosome.</text>
</comment>
<comment type="subunit">
    <text evidence="1">Part of the 30S ribosomal subunit. Forms a bridge to the 50S subunit in the 70S ribosome, contacting the 23S rRNA.</text>
</comment>
<comment type="similarity">
    <text evidence="1">Belongs to the universal ribosomal protein uS15 family.</text>
</comment>
<protein>
    <recommendedName>
        <fullName evidence="1">Small ribosomal subunit protein uS15</fullName>
    </recommendedName>
    <alternativeName>
        <fullName evidence="2">30S ribosomal protein S15</fullName>
    </alternativeName>
</protein>
<feature type="chain" id="PRO_0000115576" description="Small ribosomal subunit protein uS15">
    <location>
        <begin position="1"/>
        <end position="89"/>
    </location>
</feature>
<evidence type="ECO:0000255" key="1">
    <source>
        <dbReference type="HAMAP-Rule" id="MF_01343"/>
    </source>
</evidence>
<evidence type="ECO:0000305" key="2"/>
<accession>Q73NW2</accession>